<comment type="function">
    <text evidence="1 2">Probably acts as a heme chaperone, transferring heme to an unknown acceptor. Binds one molecule of heme per monomer, possibly covalently (By similarity). Binds 1 [4Fe-4S] cluster. The cluster is coordinated with 3 cysteines and an exchangeable S-adenosyl-L-methionine (By similarity).</text>
</comment>
<comment type="cofactor">
    <cofactor evidence="4">
        <name>[4Fe-4S] cluster</name>
        <dbReference type="ChEBI" id="CHEBI:49883"/>
    </cofactor>
</comment>
<comment type="subcellular location">
    <subcellularLocation>
        <location evidence="3">Cytoplasm</location>
    </subcellularLocation>
</comment>
<comment type="miscellaneous">
    <text evidence="1">Might carry two S-adenosyl-L-methionine binding sites with only one binding to the iron-sulfur cluster.</text>
</comment>
<comment type="similarity">
    <text evidence="5">Belongs to the anaerobic coproporphyrinogen-III oxidase family. HemW subfamily.</text>
</comment>
<reference key="1">
    <citation type="journal article" date="2000" name="Nature">
        <title>Genome sequence of the endocellular bacterial symbiont of aphids Buchnera sp. APS.</title>
        <authorList>
            <person name="Shigenobu S."/>
            <person name="Watanabe H."/>
            <person name="Hattori M."/>
            <person name="Sakaki Y."/>
            <person name="Ishikawa H."/>
        </authorList>
    </citation>
    <scope>NUCLEOTIDE SEQUENCE [LARGE SCALE GENOMIC DNA]</scope>
    <source>
        <strain>APS</strain>
    </source>
</reference>
<dbReference type="EMBL" id="BA000003">
    <property type="protein sequence ID" value="BAB13242.1"/>
    <property type="molecule type" value="Genomic_DNA"/>
</dbReference>
<dbReference type="RefSeq" id="NP_240356.1">
    <property type="nucleotide sequence ID" value="NC_002528.1"/>
</dbReference>
<dbReference type="RefSeq" id="WP_009874500.1">
    <property type="nucleotide sequence ID" value="NC_002528.1"/>
</dbReference>
<dbReference type="SMR" id="P57615"/>
<dbReference type="STRING" id="563178.BUAP5A_543"/>
<dbReference type="EnsemblBacteria" id="BAB13242">
    <property type="protein sequence ID" value="BAB13242"/>
    <property type="gene ID" value="BAB13242"/>
</dbReference>
<dbReference type="KEGG" id="buc:BU550"/>
<dbReference type="PATRIC" id="fig|107806.10.peg.554"/>
<dbReference type="eggNOG" id="COG0635">
    <property type="taxonomic scope" value="Bacteria"/>
</dbReference>
<dbReference type="HOGENOM" id="CLU_027579_2_1_6"/>
<dbReference type="BioCyc" id="BAPH107806:GBZJ-543-MONOMER"/>
<dbReference type="Proteomes" id="UP000001806">
    <property type="component" value="Chromosome"/>
</dbReference>
<dbReference type="GO" id="GO:0005737">
    <property type="term" value="C:cytoplasm"/>
    <property type="evidence" value="ECO:0000250"/>
    <property type="project" value="UniProtKB"/>
</dbReference>
<dbReference type="GO" id="GO:0051539">
    <property type="term" value="F:4 iron, 4 sulfur cluster binding"/>
    <property type="evidence" value="ECO:0000250"/>
    <property type="project" value="UniProtKB"/>
</dbReference>
<dbReference type="GO" id="GO:0004109">
    <property type="term" value="F:coproporphyrinogen oxidase activity"/>
    <property type="evidence" value="ECO:0007669"/>
    <property type="project" value="InterPro"/>
</dbReference>
<dbReference type="GO" id="GO:0046872">
    <property type="term" value="F:metal ion binding"/>
    <property type="evidence" value="ECO:0007669"/>
    <property type="project" value="UniProtKB-KW"/>
</dbReference>
<dbReference type="GO" id="GO:0006779">
    <property type="term" value="P:porphyrin-containing compound biosynthetic process"/>
    <property type="evidence" value="ECO:0000250"/>
    <property type="project" value="UniProtKB"/>
</dbReference>
<dbReference type="CDD" id="cd01335">
    <property type="entry name" value="Radical_SAM"/>
    <property type="match status" value="1"/>
</dbReference>
<dbReference type="Gene3D" id="3.20.20.70">
    <property type="entry name" value="Aldolase class I"/>
    <property type="match status" value="1"/>
</dbReference>
<dbReference type="InterPro" id="IPR013785">
    <property type="entry name" value="Aldolase_TIM"/>
</dbReference>
<dbReference type="InterPro" id="IPR034505">
    <property type="entry name" value="Coproporphyrinogen-III_oxidase"/>
</dbReference>
<dbReference type="InterPro" id="IPR006638">
    <property type="entry name" value="Elp3/MiaA/NifB-like_rSAM"/>
</dbReference>
<dbReference type="InterPro" id="IPR010723">
    <property type="entry name" value="HemN_C"/>
</dbReference>
<dbReference type="InterPro" id="IPR004559">
    <property type="entry name" value="HemW-like"/>
</dbReference>
<dbReference type="InterPro" id="IPR007197">
    <property type="entry name" value="rSAM"/>
</dbReference>
<dbReference type="NCBIfam" id="TIGR00539">
    <property type="entry name" value="hemN_rel"/>
    <property type="match status" value="1"/>
</dbReference>
<dbReference type="PANTHER" id="PTHR13932">
    <property type="entry name" value="COPROPORPHYRINIGEN III OXIDASE"/>
    <property type="match status" value="1"/>
</dbReference>
<dbReference type="PANTHER" id="PTHR13932:SF5">
    <property type="entry name" value="RADICAL S-ADENOSYL METHIONINE DOMAIN-CONTAINING PROTEIN 1, MITOCHONDRIAL"/>
    <property type="match status" value="1"/>
</dbReference>
<dbReference type="Pfam" id="PF06969">
    <property type="entry name" value="HemN_C"/>
    <property type="match status" value="1"/>
</dbReference>
<dbReference type="Pfam" id="PF04055">
    <property type="entry name" value="Radical_SAM"/>
    <property type="match status" value="1"/>
</dbReference>
<dbReference type="SFLD" id="SFLDG01082">
    <property type="entry name" value="B12-binding_domain_containing"/>
    <property type="match status" value="1"/>
</dbReference>
<dbReference type="SFLD" id="SFLDF00562">
    <property type="entry name" value="HemN-like__clustered_with_heat"/>
    <property type="match status" value="1"/>
</dbReference>
<dbReference type="SFLD" id="SFLDF00288">
    <property type="entry name" value="HemN-like__clustered_with_nucl"/>
    <property type="match status" value="1"/>
</dbReference>
<dbReference type="SFLD" id="SFLDS00029">
    <property type="entry name" value="Radical_SAM"/>
    <property type="match status" value="1"/>
</dbReference>
<dbReference type="SMART" id="SM00729">
    <property type="entry name" value="Elp3"/>
    <property type="match status" value="1"/>
</dbReference>
<dbReference type="SUPFAM" id="SSF102114">
    <property type="entry name" value="Radical SAM enzymes"/>
    <property type="match status" value="1"/>
</dbReference>
<dbReference type="PROSITE" id="PS51918">
    <property type="entry name" value="RADICAL_SAM"/>
    <property type="match status" value="1"/>
</dbReference>
<gene>
    <name evidence="2" type="primary">hemW</name>
    <name type="ordered locus">BU550</name>
</gene>
<name>HEMW_BUCAI</name>
<protein>
    <recommendedName>
        <fullName>Heme chaperone HemW</fullName>
    </recommendedName>
    <alternativeName>
        <fullName>Oxygen-independent coproporphyrinogen-III oxidase-like protein BU550</fullName>
    </alternativeName>
</protein>
<feature type="chain" id="PRO_0000109958" description="Heme chaperone HemW">
    <location>
        <begin position="1"/>
        <end position="376"/>
    </location>
</feature>
<feature type="domain" description="Radical SAM core" evidence="4">
    <location>
        <begin position="1"/>
        <end position="233"/>
    </location>
</feature>
<feature type="binding site" evidence="1">
    <location>
        <position position="10"/>
    </location>
    <ligand>
        <name>S-adenosyl-L-methionine</name>
        <dbReference type="ChEBI" id="CHEBI:59789"/>
        <label>1</label>
    </ligand>
</feature>
<feature type="binding site" evidence="1">
    <location>
        <position position="16"/>
    </location>
    <ligand>
        <name>[4Fe-4S] cluster</name>
        <dbReference type="ChEBI" id="CHEBI:49883"/>
        <note>4Fe-4S-S-AdoMet</note>
    </ligand>
</feature>
<feature type="binding site" evidence="1">
    <location>
        <position position="20"/>
    </location>
    <ligand>
        <name>[4Fe-4S] cluster</name>
        <dbReference type="ChEBI" id="CHEBI:49883"/>
        <note>4Fe-4S-S-AdoMet</note>
    </ligand>
</feature>
<feature type="binding site" evidence="1">
    <location>
        <position position="23"/>
    </location>
    <ligand>
        <name>[4Fe-4S] cluster</name>
        <dbReference type="ChEBI" id="CHEBI:49883"/>
        <note>4Fe-4S-S-AdoMet</note>
    </ligand>
</feature>
<feature type="binding site" evidence="1">
    <location>
        <position position="66"/>
    </location>
    <ligand>
        <name>S-adenosyl-L-methionine</name>
        <dbReference type="ChEBI" id="CHEBI:59789"/>
        <label>1</label>
    </ligand>
</feature>
<feature type="binding site" evidence="1">
    <location>
        <begin position="67"/>
        <end position="68"/>
    </location>
    <ligand>
        <name>S-adenosyl-L-methionine</name>
        <dbReference type="ChEBI" id="CHEBI:59789"/>
        <label>2</label>
    </ligand>
</feature>
<feature type="binding site" evidence="1">
    <location>
        <position position="99"/>
    </location>
    <ligand>
        <name>S-adenosyl-L-methionine</name>
        <dbReference type="ChEBI" id="CHEBI:59789"/>
        <label>1</label>
    </ligand>
</feature>
<feature type="binding site" evidence="1">
    <location>
        <position position="126"/>
    </location>
    <ligand>
        <name>S-adenosyl-L-methionine</name>
        <dbReference type="ChEBI" id="CHEBI:59789"/>
        <label>2</label>
    </ligand>
</feature>
<feature type="binding site" evidence="1">
    <location>
        <position position="138"/>
    </location>
    <ligand>
        <name>S-adenosyl-L-methionine</name>
        <dbReference type="ChEBI" id="CHEBI:59789"/>
        <label>2</label>
    </ligand>
</feature>
<feature type="binding site" evidence="1">
    <location>
        <position position="162"/>
    </location>
    <ligand>
        <name>S-adenosyl-L-methionine</name>
        <dbReference type="ChEBI" id="CHEBI:59789"/>
        <label>2</label>
    </ligand>
</feature>
<keyword id="KW-0004">4Fe-4S</keyword>
<keyword id="KW-0143">Chaperone</keyword>
<keyword id="KW-0963">Cytoplasm</keyword>
<keyword id="KW-0349">Heme</keyword>
<keyword id="KW-0408">Iron</keyword>
<keyword id="KW-0411">Iron-sulfur</keyword>
<keyword id="KW-0479">Metal-binding</keyword>
<keyword id="KW-1185">Reference proteome</keyword>
<keyword id="KW-0949">S-adenosyl-L-methionine</keyword>
<sequence length="376" mass="43905">MFTLPPISLYIHIPWCLKKCGYCDFYSYVSKEIIPENKYIEHLLRDFERDLSLINNRNINTIFIGGGTPSLLKNTSIKNLLNGIKKRKIISKNIEISIEANPKTLEYQNFIQYKNSGINRFSLGIQTFNSKMLKKIERTYNSKDAMNAIIESKKISDNINLDLMYGLPGQSLEEALSDLQIAIQCNPSHISWYQLTIEPNTVFYAKKIQTPHQDVVFNMLIEGDKLLKKAGYKKYEISSYSKFNYQCQHNLNYWNFGDYIGIGCGSHGKITQKNGEIIRTIKNKNINDFLSGKYINSVYQVSKRDKIFEYFMNVFRLYKPIFKKHFRENTNIEESFIEKNIQIAIQEGFLINQSDCWHTTKKGKNFLNSLLEIFLK</sequence>
<accession>P57615</accession>
<evidence type="ECO:0000250" key="1">
    <source>
        <dbReference type="UniProtKB" id="P32131"/>
    </source>
</evidence>
<evidence type="ECO:0000250" key="2">
    <source>
        <dbReference type="UniProtKB" id="P52062"/>
    </source>
</evidence>
<evidence type="ECO:0000250" key="3">
    <source>
        <dbReference type="UniProtKB" id="Q9CGF7"/>
    </source>
</evidence>
<evidence type="ECO:0000255" key="4">
    <source>
        <dbReference type="PROSITE-ProRule" id="PRU01266"/>
    </source>
</evidence>
<evidence type="ECO:0000305" key="5"/>
<organism>
    <name type="scientific">Buchnera aphidicola subsp. Acyrthosiphon pisum (strain APS)</name>
    <name type="common">Acyrthosiphon pisum symbiotic bacterium</name>
    <dbReference type="NCBI Taxonomy" id="107806"/>
    <lineage>
        <taxon>Bacteria</taxon>
        <taxon>Pseudomonadati</taxon>
        <taxon>Pseudomonadota</taxon>
        <taxon>Gammaproteobacteria</taxon>
        <taxon>Enterobacterales</taxon>
        <taxon>Erwiniaceae</taxon>
        <taxon>Buchnera</taxon>
    </lineage>
</organism>
<proteinExistence type="inferred from homology"/>